<accession>Q5PCV6</accession>
<proteinExistence type="inferred from homology"/>
<evidence type="ECO:0000255" key="1">
    <source>
        <dbReference type="HAMAP-Rule" id="MF_00171"/>
    </source>
</evidence>
<keyword id="KW-0413">Isomerase</keyword>
<keyword id="KW-0819">tRNA processing</keyword>
<protein>
    <recommendedName>
        <fullName evidence="1">tRNA pseudouridine synthase A</fullName>
        <ecNumber evidence="1">5.4.99.12</ecNumber>
    </recommendedName>
    <alternativeName>
        <fullName evidence="1">tRNA pseudouridine(38-40) synthase</fullName>
    </alternativeName>
    <alternativeName>
        <fullName evidence="1">tRNA pseudouridylate synthase I</fullName>
    </alternativeName>
    <alternativeName>
        <fullName evidence="1">tRNA-uridine isomerase I</fullName>
    </alternativeName>
</protein>
<feature type="chain" id="PRO_0000057443" description="tRNA pseudouridine synthase A">
    <location>
        <begin position="1"/>
        <end position="270"/>
    </location>
</feature>
<feature type="active site" description="Nucleophile" evidence="1">
    <location>
        <position position="60"/>
    </location>
</feature>
<feature type="binding site" evidence="1">
    <location>
        <position position="118"/>
    </location>
    <ligand>
        <name>substrate</name>
    </ligand>
</feature>
<comment type="function">
    <text evidence="1">Formation of pseudouridine at positions 38, 39 and 40 in the anticodon stem and loop of transfer RNAs.</text>
</comment>
<comment type="catalytic activity">
    <reaction evidence="1">
        <text>uridine(38/39/40) in tRNA = pseudouridine(38/39/40) in tRNA</text>
        <dbReference type="Rhea" id="RHEA:22376"/>
        <dbReference type="Rhea" id="RHEA-COMP:10085"/>
        <dbReference type="Rhea" id="RHEA-COMP:10087"/>
        <dbReference type="ChEBI" id="CHEBI:65314"/>
        <dbReference type="ChEBI" id="CHEBI:65315"/>
        <dbReference type="EC" id="5.4.99.12"/>
    </reaction>
</comment>
<comment type="subunit">
    <text evidence="1">Homodimer.</text>
</comment>
<comment type="similarity">
    <text evidence="1">Belongs to the tRNA pseudouridine synthase TruA family.</text>
</comment>
<dbReference type="EC" id="5.4.99.12" evidence="1"/>
<dbReference type="EMBL" id="CP000026">
    <property type="protein sequence ID" value="AAV76498.1"/>
    <property type="molecule type" value="Genomic_DNA"/>
</dbReference>
<dbReference type="RefSeq" id="WP_000016631.1">
    <property type="nucleotide sequence ID" value="NC_006511.1"/>
</dbReference>
<dbReference type="SMR" id="Q5PCV6"/>
<dbReference type="KEGG" id="spt:SPA0496"/>
<dbReference type="HOGENOM" id="CLU_014673_0_2_6"/>
<dbReference type="Proteomes" id="UP000008185">
    <property type="component" value="Chromosome"/>
</dbReference>
<dbReference type="GO" id="GO:0003723">
    <property type="term" value="F:RNA binding"/>
    <property type="evidence" value="ECO:0007669"/>
    <property type="project" value="InterPro"/>
</dbReference>
<dbReference type="GO" id="GO:0160147">
    <property type="term" value="F:tRNA pseudouridine(38-40) synthase activity"/>
    <property type="evidence" value="ECO:0007669"/>
    <property type="project" value="UniProtKB-EC"/>
</dbReference>
<dbReference type="GO" id="GO:0031119">
    <property type="term" value="P:tRNA pseudouridine synthesis"/>
    <property type="evidence" value="ECO:0007669"/>
    <property type="project" value="UniProtKB-UniRule"/>
</dbReference>
<dbReference type="CDD" id="cd02570">
    <property type="entry name" value="PseudoU_synth_EcTruA"/>
    <property type="match status" value="1"/>
</dbReference>
<dbReference type="FunFam" id="3.30.70.580:FF:000001">
    <property type="entry name" value="tRNA pseudouridine synthase A"/>
    <property type="match status" value="1"/>
</dbReference>
<dbReference type="FunFam" id="3.30.70.660:FF:000001">
    <property type="entry name" value="tRNA pseudouridine synthase A"/>
    <property type="match status" value="1"/>
</dbReference>
<dbReference type="Gene3D" id="3.30.70.660">
    <property type="entry name" value="Pseudouridine synthase I, catalytic domain, C-terminal subdomain"/>
    <property type="match status" value="1"/>
</dbReference>
<dbReference type="Gene3D" id="3.30.70.580">
    <property type="entry name" value="Pseudouridine synthase I, catalytic domain, N-terminal subdomain"/>
    <property type="match status" value="1"/>
</dbReference>
<dbReference type="HAMAP" id="MF_00171">
    <property type="entry name" value="TruA"/>
    <property type="match status" value="1"/>
</dbReference>
<dbReference type="InterPro" id="IPR020103">
    <property type="entry name" value="PsdUridine_synth_cat_dom_sf"/>
</dbReference>
<dbReference type="InterPro" id="IPR001406">
    <property type="entry name" value="PsdUridine_synth_TruA"/>
</dbReference>
<dbReference type="InterPro" id="IPR020097">
    <property type="entry name" value="PsdUridine_synth_TruA_a/b_dom"/>
</dbReference>
<dbReference type="InterPro" id="IPR020095">
    <property type="entry name" value="PsdUridine_synth_TruA_C"/>
</dbReference>
<dbReference type="InterPro" id="IPR020094">
    <property type="entry name" value="TruA/RsuA/RluB/E/F_N"/>
</dbReference>
<dbReference type="NCBIfam" id="TIGR00071">
    <property type="entry name" value="hisT_truA"/>
    <property type="match status" value="1"/>
</dbReference>
<dbReference type="PANTHER" id="PTHR11142">
    <property type="entry name" value="PSEUDOURIDYLATE SYNTHASE"/>
    <property type="match status" value="1"/>
</dbReference>
<dbReference type="PANTHER" id="PTHR11142:SF0">
    <property type="entry name" value="TRNA PSEUDOURIDINE SYNTHASE-LIKE 1"/>
    <property type="match status" value="1"/>
</dbReference>
<dbReference type="Pfam" id="PF01416">
    <property type="entry name" value="PseudoU_synth_1"/>
    <property type="match status" value="2"/>
</dbReference>
<dbReference type="PIRSF" id="PIRSF001430">
    <property type="entry name" value="tRNA_psdUrid_synth"/>
    <property type="match status" value="1"/>
</dbReference>
<dbReference type="SUPFAM" id="SSF55120">
    <property type="entry name" value="Pseudouridine synthase"/>
    <property type="match status" value="1"/>
</dbReference>
<name>TRUA_SALPA</name>
<organism>
    <name type="scientific">Salmonella paratyphi A (strain ATCC 9150 / SARB42)</name>
    <dbReference type="NCBI Taxonomy" id="295319"/>
    <lineage>
        <taxon>Bacteria</taxon>
        <taxon>Pseudomonadati</taxon>
        <taxon>Pseudomonadota</taxon>
        <taxon>Gammaproteobacteria</taxon>
        <taxon>Enterobacterales</taxon>
        <taxon>Enterobacteriaceae</taxon>
        <taxon>Salmonella</taxon>
    </lineage>
</organism>
<gene>
    <name evidence="1" type="primary">truA</name>
    <name type="ordered locus">SPA0496</name>
</gene>
<reference key="1">
    <citation type="journal article" date="2004" name="Nat. Genet.">
        <title>Comparison of genome degradation in Paratyphi A and Typhi, human-restricted serovars of Salmonella enterica that cause typhoid.</title>
        <authorList>
            <person name="McClelland M."/>
            <person name="Sanderson K.E."/>
            <person name="Clifton S.W."/>
            <person name="Latreille P."/>
            <person name="Porwollik S."/>
            <person name="Sabo A."/>
            <person name="Meyer R."/>
            <person name="Bieri T."/>
            <person name="Ozersky P."/>
            <person name="McLellan M."/>
            <person name="Harkins C.R."/>
            <person name="Wang C."/>
            <person name="Nguyen C."/>
            <person name="Berghoff A."/>
            <person name="Elliott G."/>
            <person name="Kohlberg S."/>
            <person name="Strong C."/>
            <person name="Du F."/>
            <person name="Carter J."/>
            <person name="Kremizki C."/>
            <person name="Layman D."/>
            <person name="Leonard S."/>
            <person name="Sun H."/>
            <person name="Fulton L."/>
            <person name="Nash W."/>
            <person name="Miner T."/>
            <person name="Minx P."/>
            <person name="Delehaunty K."/>
            <person name="Fronick C."/>
            <person name="Magrini V."/>
            <person name="Nhan M."/>
            <person name="Warren W."/>
            <person name="Florea L."/>
            <person name="Spieth J."/>
            <person name="Wilson R.K."/>
        </authorList>
    </citation>
    <scope>NUCLEOTIDE SEQUENCE [LARGE SCALE GENOMIC DNA]</scope>
    <source>
        <strain>ATCC 9150 / SARB42</strain>
    </source>
</reference>
<sequence length="270" mass="30297">MSGQQSSPVYKIALGIEYDGSKYYGWQRQNEVRSVQEKLEKALSQVANEPINVFCAGRTDAGVHGTGQVVHFETTALRKDAAWTLGVNANLPGDIAVRWVKTVPDDFHARFSATARRYRYIIYNHRLRPAVLAKGVTHYYEPLDAERMHRAAQCLLGENDFTSFRAVQCQSRTPWRNVMHINVTRHGPYVVVDIKANAFVHHMVRNIVGSLLEVGAHNQPESWIAELLAARDRTLAAATAKAEGLYLVAVDYPDRFDLPKPPMGPLFLAD</sequence>